<accession>C3N5R8</accession>
<comment type="function">
    <text evidence="1">Molecular chaperone capable of stabilizing a range of proteins. Seems to fulfill an ATP-independent, HSP70-like function in archaeal de novo protein folding.</text>
</comment>
<comment type="subunit">
    <text evidence="1">Heterohexamer of two alpha and four beta subunits.</text>
</comment>
<comment type="subcellular location">
    <subcellularLocation>
        <location evidence="1">Cytoplasm</location>
    </subcellularLocation>
</comment>
<comment type="similarity">
    <text evidence="1">Belongs to the prefoldin subunit beta family.</text>
</comment>
<name>PFDB_SACI3</name>
<protein>
    <recommendedName>
        <fullName evidence="1">Prefoldin subunit beta</fullName>
    </recommendedName>
    <alternativeName>
        <fullName evidence="1">GimC subunit beta</fullName>
    </alternativeName>
</protein>
<keyword id="KW-0143">Chaperone</keyword>
<keyword id="KW-0963">Cytoplasm</keyword>
<gene>
    <name evidence="1" type="primary">pfdB</name>
    <name type="ordered locus">M1627_1461</name>
</gene>
<dbReference type="EMBL" id="CP001401">
    <property type="protein sequence ID" value="ACP55343.1"/>
    <property type="molecule type" value="Genomic_DNA"/>
</dbReference>
<dbReference type="RefSeq" id="WP_012711409.1">
    <property type="nucleotide sequence ID" value="NC_012632.1"/>
</dbReference>
<dbReference type="SMR" id="C3N5R8"/>
<dbReference type="KEGG" id="sim:M1627_1461"/>
<dbReference type="HOGENOM" id="CLU_131909_2_1_2"/>
<dbReference type="Proteomes" id="UP000002307">
    <property type="component" value="Chromosome"/>
</dbReference>
<dbReference type="GO" id="GO:0005737">
    <property type="term" value="C:cytoplasm"/>
    <property type="evidence" value="ECO:0007669"/>
    <property type="project" value="UniProtKB-SubCell"/>
</dbReference>
<dbReference type="GO" id="GO:0016272">
    <property type="term" value="C:prefoldin complex"/>
    <property type="evidence" value="ECO:0007669"/>
    <property type="project" value="UniProtKB-UniRule"/>
</dbReference>
<dbReference type="GO" id="GO:0051087">
    <property type="term" value="F:protein-folding chaperone binding"/>
    <property type="evidence" value="ECO:0007669"/>
    <property type="project" value="TreeGrafter"/>
</dbReference>
<dbReference type="GO" id="GO:0051082">
    <property type="term" value="F:unfolded protein binding"/>
    <property type="evidence" value="ECO:0007669"/>
    <property type="project" value="UniProtKB-UniRule"/>
</dbReference>
<dbReference type="GO" id="GO:0051131">
    <property type="term" value="P:chaperone-mediated protein complex assembly"/>
    <property type="evidence" value="ECO:0007669"/>
    <property type="project" value="TreeGrafter"/>
</dbReference>
<dbReference type="GO" id="GO:0006457">
    <property type="term" value="P:protein folding"/>
    <property type="evidence" value="ECO:0007669"/>
    <property type="project" value="UniProtKB-UniRule"/>
</dbReference>
<dbReference type="CDD" id="cd23162">
    <property type="entry name" value="Prefoldin_beta_GimC"/>
    <property type="match status" value="1"/>
</dbReference>
<dbReference type="FunFam" id="1.10.287.370:FF:000013">
    <property type="entry name" value="Prefoldin subunit beta"/>
    <property type="match status" value="1"/>
</dbReference>
<dbReference type="Gene3D" id="1.10.287.370">
    <property type="match status" value="1"/>
</dbReference>
<dbReference type="HAMAP" id="MF_00307">
    <property type="entry name" value="PfdB"/>
    <property type="match status" value="1"/>
</dbReference>
<dbReference type="InterPro" id="IPR002777">
    <property type="entry name" value="PFD_beta-like"/>
</dbReference>
<dbReference type="InterPro" id="IPR012713">
    <property type="entry name" value="PfdB"/>
</dbReference>
<dbReference type="InterPro" id="IPR009053">
    <property type="entry name" value="Prefoldin"/>
</dbReference>
<dbReference type="NCBIfam" id="TIGR02338">
    <property type="entry name" value="gimC_beta"/>
    <property type="match status" value="1"/>
</dbReference>
<dbReference type="PANTHER" id="PTHR21431">
    <property type="entry name" value="PREFOLDIN SUBUNIT 6"/>
    <property type="match status" value="1"/>
</dbReference>
<dbReference type="PANTHER" id="PTHR21431:SF0">
    <property type="entry name" value="PREFOLDIN SUBUNIT 6"/>
    <property type="match status" value="1"/>
</dbReference>
<dbReference type="Pfam" id="PF01920">
    <property type="entry name" value="Prefoldin_2"/>
    <property type="match status" value="1"/>
</dbReference>
<dbReference type="SUPFAM" id="SSF46579">
    <property type="entry name" value="Prefoldin"/>
    <property type="match status" value="1"/>
</dbReference>
<reference key="1">
    <citation type="journal article" date="2009" name="Proc. Natl. Acad. Sci. U.S.A.">
        <title>Biogeography of the Sulfolobus islandicus pan-genome.</title>
        <authorList>
            <person name="Reno M.L."/>
            <person name="Held N.L."/>
            <person name="Fields C.J."/>
            <person name="Burke P.V."/>
            <person name="Whitaker R.J."/>
        </authorList>
    </citation>
    <scope>NUCLEOTIDE SEQUENCE [LARGE SCALE GENOMIC DNA]</scope>
    <source>
        <strain>M.16.27</strain>
    </source>
</reference>
<evidence type="ECO:0000255" key="1">
    <source>
        <dbReference type="HAMAP-Rule" id="MF_00307"/>
    </source>
</evidence>
<proteinExistence type="inferred from homology"/>
<feature type="chain" id="PRO_1000205018" description="Prefoldin subunit beta">
    <location>
        <begin position="1"/>
        <end position="126"/>
    </location>
</feature>
<organism>
    <name type="scientific">Saccharolobus islandicus (strain M.16.27)</name>
    <name type="common">Sulfolobus islandicus</name>
    <dbReference type="NCBI Taxonomy" id="427318"/>
    <lineage>
        <taxon>Archaea</taxon>
        <taxon>Thermoproteota</taxon>
        <taxon>Thermoprotei</taxon>
        <taxon>Sulfolobales</taxon>
        <taxon>Sulfolobaceae</taxon>
        <taxon>Saccharolobus</taxon>
    </lineage>
</organism>
<sequence length="126" mass="14557">MAEKLPPEVQAQLAKFQQLKDQLDRLLLEKSTIENELREINKVLEELSVLNADATIYKIVGNLLVKSDKTSVEKELNDRKELLELRSRTYQKQESILRKQLEDLQAKINEMLSKYYPQGGQTGIKA</sequence>